<comment type="subcellular location">
    <subcellularLocation>
        <location evidence="2">Cell membrane</location>
        <topology evidence="2">Multi-pass membrane protein</topology>
    </subcellularLocation>
</comment>
<comment type="similarity">
    <text evidence="2">Belongs to the EamA transporter family.</text>
</comment>
<dbReference type="EMBL" id="BA000022">
    <property type="protein sequence ID" value="BAA18537.1"/>
    <property type="molecule type" value="Genomic_DNA"/>
</dbReference>
<dbReference type="PIR" id="S76408">
    <property type="entry name" value="S76408"/>
</dbReference>
<dbReference type="SMR" id="P74436"/>
<dbReference type="FunCoup" id="P74436">
    <property type="interactions" value="462"/>
</dbReference>
<dbReference type="IntAct" id="P74436">
    <property type="interactions" value="3"/>
</dbReference>
<dbReference type="STRING" id="1148.gene:10499419"/>
<dbReference type="PaxDb" id="1148-1653625"/>
<dbReference type="EnsemblBacteria" id="BAA18537">
    <property type="protein sequence ID" value="BAA18537"/>
    <property type="gene ID" value="BAA18537"/>
</dbReference>
<dbReference type="KEGG" id="syn:sll0355"/>
<dbReference type="eggNOG" id="COG0697">
    <property type="taxonomic scope" value="Bacteria"/>
</dbReference>
<dbReference type="InParanoid" id="P74436"/>
<dbReference type="PhylomeDB" id="P74436"/>
<dbReference type="Proteomes" id="UP000001425">
    <property type="component" value="Chromosome"/>
</dbReference>
<dbReference type="GO" id="GO:0005886">
    <property type="term" value="C:plasma membrane"/>
    <property type="evidence" value="ECO:0007669"/>
    <property type="project" value="UniProtKB-SubCell"/>
</dbReference>
<dbReference type="Gene3D" id="1.10.3730.20">
    <property type="match status" value="1"/>
</dbReference>
<dbReference type="InterPro" id="IPR050638">
    <property type="entry name" value="AA-Vitamin_Transporters"/>
</dbReference>
<dbReference type="InterPro" id="IPR000620">
    <property type="entry name" value="EamA_dom"/>
</dbReference>
<dbReference type="PANTHER" id="PTHR32322:SF2">
    <property type="entry name" value="EAMA DOMAIN-CONTAINING PROTEIN"/>
    <property type="match status" value="1"/>
</dbReference>
<dbReference type="PANTHER" id="PTHR32322">
    <property type="entry name" value="INNER MEMBRANE TRANSPORTER"/>
    <property type="match status" value="1"/>
</dbReference>
<dbReference type="Pfam" id="PF00892">
    <property type="entry name" value="EamA"/>
    <property type="match status" value="2"/>
</dbReference>
<dbReference type="SUPFAM" id="SSF103481">
    <property type="entry name" value="Multidrug resistance efflux transporter EmrE"/>
    <property type="match status" value="2"/>
</dbReference>
<proteinExistence type="inferred from homology"/>
<reference key="1">
    <citation type="journal article" date="1996" name="DNA Res.">
        <title>Sequence analysis of the genome of the unicellular cyanobacterium Synechocystis sp. strain PCC6803. II. Sequence determination of the entire genome and assignment of potential protein-coding regions.</title>
        <authorList>
            <person name="Kaneko T."/>
            <person name="Sato S."/>
            <person name="Kotani H."/>
            <person name="Tanaka A."/>
            <person name="Asamizu E."/>
            <person name="Nakamura Y."/>
            <person name="Miyajima N."/>
            <person name="Hirosawa M."/>
            <person name="Sugiura M."/>
            <person name="Sasamoto S."/>
            <person name="Kimura T."/>
            <person name="Hosouchi T."/>
            <person name="Matsuno A."/>
            <person name="Muraki A."/>
            <person name="Nakazaki N."/>
            <person name="Naruo K."/>
            <person name="Okumura S."/>
            <person name="Shimpo S."/>
            <person name="Takeuchi C."/>
            <person name="Wada T."/>
            <person name="Watanabe A."/>
            <person name="Yamada M."/>
            <person name="Yasuda M."/>
            <person name="Tabata S."/>
        </authorList>
    </citation>
    <scope>NUCLEOTIDE SEQUENCE [LARGE SCALE GENOMIC DNA]</scope>
    <source>
        <strain>ATCC 27184 / PCC 6803 / Kazusa</strain>
    </source>
</reference>
<evidence type="ECO:0000255" key="1"/>
<evidence type="ECO:0000305" key="2"/>
<feature type="chain" id="PRO_0000108195" description="Uncharacterized transporter sll0355">
    <location>
        <begin position="1"/>
        <end position="330"/>
    </location>
</feature>
<feature type="transmembrane region" description="Helical" evidence="1">
    <location>
        <begin position="15"/>
        <end position="35"/>
    </location>
</feature>
<feature type="transmembrane region" description="Helical" evidence="1">
    <location>
        <begin position="41"/>
        <end position="61"/>
    </location>
</feature>
<feature type="transmembrane region" description="Helical" evidence="1">
    <location>
        <begin position="72"/>
        <end position="92"/>
    </location>
</feature>
<feature type="transmembrane region" description="Helical" evidence="1">
    <location>
        <begin position="102"/>
        <end position="122"/>
    </location>
</feature>
<feature type="transmembrane region" description="Helical" evidence="1">
    <location>
        <begin position="125"/>
        <end position="145"/>
    </location>
</feature>
<feature type="transmembrane region" description="Helical" evidence="1">
    <location>
        <begin position="175"/>
        <end position="195"/>
    </location>
</feature>
<feature type="transmembrane region" description="Helical" evidence="1">
    <location>
        <begin position="201"/>
        <end position="221"/>
    </location>
</feature>
<feature type="transmembrane region" description="Helical" evidence="1">
    <location>
        <begin position="238"/>
        <end position="258"/>
    </location>
</feature>
<feature type="transmembrane region" description="Helical" evidence="1">
    <location>
        <begin position="264"/>
        <end position="284"/>
    </location>
</feature>
<feature type="transmembrane region" description="Helical" evidence="1">
    <location>
        <begin position="286"/>
        <end position="306"/>
    </location>
</feature>
<feature type="domain" description="EamA 1">
    <location>
        <begin position="22"/>
        <end position="146"/>
    </location>
</feature>
<feature type="domain" description="EamA 2">
    <location>
        <begin position="182"/>
        <end position="308"/>
    </location>
</feature>
<gene>
    <name type="ordered locus">sll0355</name>
</gene>
<accession>P74436</accession>
<organism>
    <name type="scientific">Synechocystis sp. (strain ATCC 27184 / PCC 6803 / Kazusa)</name>
    <dbReference type="NCBI Taxonomy" id="1111708"/>
    <lineage>
        <taxon>Bacteria</taxon>
        <taxon>Bacillati</taxon>
        <taxon>Cyanobacteriota</taxon>
        <taxon>Cyanophyceae</taxon>
        <taxon>Synechococcales</taxon>
        <taxon>Merismopediaceae</taxon>
        <taxon>Synechocystis</taxon>
    </lineage>
</organism>
<keyword id="KW-1003">Cell membrane</keyword>
<keyword id="KW-0472">Membrane</keyword>
<keyword id="KW-1185">Reference proteome</keyword>
<keyword id="KW-0677">Repeat</keyword>
<keyword id="KW-0812">Transmembrane</keyword>
<keyword id="KW-1133">Transmembrane helix</keyword>
<keyword id="KW-0813">Transport</keyword>
<sequence>MQIESKTNTNIRSGLTLIAPFFLWGTAMVAMKGVLADTTPFFVATVRLIPAGILVLLWAMGQKRPQPQNWQGWGWIILFALVDGTLFQGFLAQGLERTGAGLGSVIIDSQPIAVALLSSWLFKEVIGGIGWLGLLLGVGGISLIGLPDEWFYQLWHLQGLSINWSGSALGSSGELWMLLASLSMAVGTVLIPFVSRRVDPVVATGWHMIIGGLPLLAIALVQDSEPWQNIDLWGWGNLAYATVFGSAIAYGIFFYLASKGNLTSLSSLTFLTPIFALSFSNLILEEQLSSLQWLGVAFTLVSIYLINQREQLKIQLRDIWSLVRKPVIND</sequence>
<name>Y355_SYNY3</name>
<protein>
    <recommendedName>
        <fullName>Uncharacterized transporter sll0355</fullName>
    </recommendedName>
</protein>